<feature type="chain" id="PRO_1000202141" description="Ribonuclease H">
    <location>
        <begin position="1"/>
        <end position="154"/>
    </location>
</feature>
<feature type="domain" description="RNase H type-1" evidence="2">
    <location>
        <begin position="1"/>
        <end position="142"/>
    </location>
</feature>
<feature type="binding site" evidence="1">
    <location>
        <position position="10"/>
    </location>
    <ligand>
        <name>Mg(2+)</name>
        <dbReference type="ChEBI" id="CHEBI:18420"/>
        <label>1</label>
    </ligand>
</feature>
<feature type="binding site" evidence="1">
    <location>
        <position position="10"/>
    </location>
    <ligand>
        <name>Mg(2+)</name>
        <dbReference type="ChEBI" id="CHEBI:18420"/>
        <label>2</label>
    </ligand>
</feature>
<feature type="binding site" evidence="1">
    <location>
        <position position="48"/>
    </location>
    <ligand>
        <name>Mg(2+)</name>
        <dbReference type="ChEBI" id="CHEBI:18420"/>
        <label>1</label>
    </ligand>
</feature>
<feature type="binding site" evidence="1">
    <location>
        <position position="70"/>
    </location>
    <ligand>
        <name>Mg(2+)</name>
        <dbReference type="ChEBI" id="CHEBI:18420"/>
        <label>1</label>
    </ligand>
</feature>
<feature type="binding site" evidence="1">
    <location>
        <position position="134"/>
    </location>
    <ligand>
        <name>Mg(2+)</name>
        <dbReference type="ChEBI" id="CHEBI:18420"/>
        <label>2</label>
    </ligand>
</feature>
<keyword id="KW-0963">Cytoplasm</keyword>
<keyword id="KW-0255">Endonuclease</keyword>
<keyword id="KW-0378">Hydrolase</keyword>
<keyword id="KW-0460">Magnesium</keyword>
<keyword id="KW-0479">Metal-binding</keyword>
<keyword id="KW-0540">Nuclease</keyword>
<keyword id="KW-1185">Reference proteome</keyword>
<reference key="1">
    <citation type="submission" date="2009-05" db="EMBL/GenBank/DDBJ databases">
        <title>Complete sequence of Tolumonas auensis DSM 9187.</title>
        <authorList>
            <consortium name="US DOE Joint Genome Institute"/>
            <person name="Lucas S."/>
            <person name="Copeland A."/>
            <person name="Lapidus A."/>
            <person name="Glavina del Rio T."/>
            <person name="Tice H."/>
            <person name="Bruce D."/>
            <person name="Goodwin L."/>
            <person name="Pitluck S."/>
            <person name="Chertkov O."/>
            <person name="Brettin T."/>
            <person name="Detter J.C."/>
            <person name="Han C."/>
            <person name="Larimer F."/>
            <person name="Land M."/>
            <person name="Hauser L."/>
            <person name="Kyrpides N."/>
            <person name="Mikhailova N."/>
            <person name="Spring S."/>
            <person name="Beller H."/>
        </authorList>
    </citation>
    <scope>NUCLEOTIDE SEQUENCE [LARGE SCALE GENOMIC DNA]</scope>
    <source>
        <strain>DSM 9187 / NBRC 110442 / TA 4</strain>
    </source>
</reference>
<accession>C4LC60</accession>
<sequence>MLKQITLYTDGSCLGNPGPGGYAAVLIYKQHRKELAQGYELTTNNRMELMAAIAGLQSLSEPCQVRLTTDSQYVRQGITQWIHGWKKKGWKTANREPVKNVDLWLLLDSEIQRHDVEWFWVKGHSGHPENERCDELARNAALADSRLIDSGYPS</sequence>
<organism>
    <name type="scientific">Tolumonas auensis (strain DSM 9187 / NBRC 110442 / TA 4)</name>
    <dbReference type="NCBI Taxonomy" id="595494"/>
    <lineage>
        <taxon>Bacteria</taxon>
        <taxon>Pseudomonadati</taxon>
        <taxon>Pseudomonadota</taxon>
        <taxon>Gammaproteobacteria</taxon>
        <taxon>Aeromonadales</taxon>
        <taxon>Aeromonadaceae</taxon>
        <taxon>Tolumonas</taxon>
    </lineage>
</organism>
<evidence type="ECO:0000255" key="1">
    <source>
        <dbReference type="HAMAP-Rule" id="MF_00042"/>
    </source>
</evidence>
<evidence type="ECO:0000255" key="2">
    <source>
        <dbReference type="PROSITE-ProRule" id="PRU00408"/>
    </source>
</evidence>
<gene>
    <name evidence="1" type="primary">rnhA</name>
    <name type="ordered locus">Tola_0911</name>
</gene>
<name>RNH_TOLAT</name>
<comment type="function">
    <text evidence="1">Endonuclease that specifically degrades the RNA of RNA-DNA hybrids.</text>
</comment>
<comment type="catalytic activity">
    <reaction evidence="1">
        <text>Endonucleolytic cleavage to 5'-phosphomonoester.</text>
        <dbReference type="EC" id="3.1.26.4"/>
    </reaction>
</comment>
<comment type="cofactor">
    <cofactor evidence="1">
        <name>Mg(2+)</name>
        <dbReference type="ChEBI" id="CHEBI:18420"/>
    </cofactor>
    <text evidence="1">Binds 1 Mg(2+) ion per subunit. May bind a second metal ion at a regulatory site, or after substrate binding.</text>
</comment>
<comment type="subunit">
    <text evidence="1">Monomer.</text>
</comment>
<comment type="subcellular location">
    <subcellularLocation>
        <location evidence="1">Cytoplasm</location>
    </subcellularLocation>
</comment>
<comment type="similarity">
    <text evidence="1">Belongs to the RNase H family.</text>
</comment>
<proteinExistence type="inferred from homology"/>
<dbReference type="EC" id="3.1.26.4" evidence="1"/>
<dbReference type="EMBL" id="CP001616">
    <property type="protein sequence ID" value="ACQ92539.1"/>
    <property type="molecule type" value="Genomic_DNA"/>
</dbReference>
<dbReference type="RefSeq" id="WP_012729138.1">
    <property type="nucleotide sequence ID" value="NC_012691.1"/>
</dbReference>
<dbReference type="SMR" id="C4LC60"/>
<dbReference type="STRING" id="595494.Tola_0911"/>
<dbReference type="KEGG" id="tau:Tola_0911"/>
<dbReference type="eggNOG" id="COG0328">
    <property type="taxonomic scope" value="Bacteria"/>
</dbReference>
<dbReference type="HOGENOM" id="CLU_030894_6_0_6"/>
<dbReference type="OrthoDB" id="7845843at2"/>
<dbReference type="Proteomes" id="UP000009073">
    <property type="component" value="Chromosome"/>
</dbReference>
<dbReference type="GO" id="GO:0005737">
    <property type="term" value="C:cytoplasm"/>
    <property type="evidence" value="ECO:0007669"/>
    <property type="project" value="UniProtKB-SubCell"/>
</dbReference>
<dbReference type="GO" id="GO:0000287">
    <property type="term" value="F:magnesium ion binding"/>
    <property type="evidence" value="ECO:0007669"/>
    <property type="project" value="UniProtKB-UniRule"/>
</dbReference>
<dbReference type="GO" id="GO:0003676">
    <property type="term" value="F:nucleic acid binding"/>
    <property type="evidence" value="ECO:0007669"/>
    <property type="project" value="InterPro"/>
</dbReference>
<dbReference type="GO" id="GO:0004523">
    <property type="term" value="F:RNA-DNA hybrid ribonuclease activity"/>
    <property type="evidence" value="ECO:0007669"/>
    <property type="project" value="UniProtKB-UniRule"/>
</dbReference>
<dbReference type="GO" id="GO:0043137">
    <property type="term" value="P:DNA replication, removal of RNA primer"/>
    <property type="evidence" value="ECO:0007669"/>
    <property type="project" value="TreeGrafter"/>
</dbReference>
<dbReference type="CDD" id="cd09278">
    <property type="entry name" value="RNase_HI_prokaryote_like"/>
    <property type="match status" value="1"/>
</dbReference>
<dbReference type="FunFam" id="3.30.420.10:FF:000008">
    <property type="entry name" value="Ribonuclease H"/>
    <property type="match status" value="1"/>
</dbReference>
<dbReference type="Gene3D" id="3.30.420.10">
    <property type="entry name" value="Ribonuclease H-like superfamily/Ribonuclease H"/>
    <property type="match status" value="1"/>
</dbReference>
<dbReference type="HAMAP" id="MF_00042">
    <property type="entry name" value="RNase_H"/>
    <property type="match status" value="1"/>
</dbReference>
<dbReference type="InterPro" id="IPR050092">
    <property type="entry name" value="RNase_H"/>
</dbReference>
<dbReference type="InterPro" id="IPR012337">
    <property type="entry name" value="RNaseH-like_sf"/>
</dbReference>
<dbReference type="InterPro" id="IPR002156">
    <property type="entry name" value="RNaseH_domain"/>
</dbReference>
<dbReference type="InterPro" id="IPR036397">
    <property type="entry name" value="RNaseH_sf"/>
</dbReference>
<dbReference type="InterPro" id="IPR022892">
    <property type="entry name" value="RNaseHI"/>
</dbReference>
<dbReference type="NCBIfam" id="NF001236">
    <property type="entry name" value="PRK00203.1"/>
    <property type="match status" value="1"/>
</dbReference>
<dbReference type="PANTHER" id="PTHR10642">
    <property type="entry name" value="RIBONUCLEASE H1"/>
    <property type="match status" value="1"/>
</dbReference>
<dbReference type="PANTHER" id="PTHR10642:SF26">
    <property type="entry name" value="RIBONUCLEASE H1"/>
    <property type="match status" value="1"/>
</dbReference>
<dbReference type="Pfam" id="PF00075">
    <property type="entry name" value="RNase_H"/>
    <property type="match status" value="1"/>
</dbReference>
<dbReference type="SUPFAM" id="SSF53098">
    <property type="entry name" value="Ribonuclease H-like"/>
    <property type="match status" value="1"/>
</dbReference>
<dbReference type="PROSITE" id="PS50879">
    <property type="entry name" value="RNASE_H_1"/>
    <property type="match status" value="1"/>
</dbReference>
<protein>
    <recommendedName>
        <fullName evidence="1">Ribonuclease H</fullName>
        <shortName evidence="1">RNase H</shortName>
        <ecNumber evidence="1">3.1.26.4</ecNumber>
    </recommendedName>
</protein>